<feature type="chain" id="PRO_0000149067" description="Small ribosomal subunit protein eS27B">
    <location>
        <begin position="1"/>
        <end position="82"/>
    </location>
</feature>
<feature type="zinc finger region" description="C4-type" evidence="1">
    <location>
        <begin position="37"/>
        <end position="59"/>
    </location>
</feature>
<sequence>MVLVQDLLHPTAASEARKHKLKTLVQGPRSYFLDVKCPGCLNITTVFSHAQTAVTCESCSTVLCTPTGGKAKLSEGTSFRRK</sequence>
<evidence type="ECO:0000255" key="1"/>
<evidence type="ECO:0000269" key="2">
    <source>
    </source>
</evidence>
<evidence type="ECO:0000269" key="3">
    <source>
    </source>
</evidence>
<evidence type="ECO:0000269" key="4">
    <source>
    </source>
</evidence>
<evidence type="ECO:0000303" key="5">
    <source>
    </source>
</evidence>
<evidence type="ECO:0000303" key="6">
    <source>
    </source>
</evidence>
<evidence type="ECO:0000305" key="7"/>
<evidence type="ECO:0000305" key="8">
    <source>
    </source>
</evidence>
<evidence type="ECO:0000305" key="9">
    <source>
    </source>
</evidence>
<name>RS27B_YEAST</name>
<keyword id="KW-0963">Cytoplasm</keyword>
<keyword id="KW-0479">Metal-binding</keyword>
<keyword id="KW-1185">Reference proteome</keyword>
<keyword id="KW-0687">Ribonucleoprotein</keyword>
<keyword id="KW-0689">Ribosomal protein</keyword>
<keyword id="KW-0862">Zinc</keyword>
<keyword id="KW-0863">Zinc-finger</keyword>
<protein>
    <recommendedName>
        <fullName evidence="5">Small ribosomal subunit protein eS27B</fullName>
    </recommendedName>
    <alternativeName>
        <fullName evidence="6">40S ribosomal protein S27-B</fullName>
    </alternativeName>
    <alternativeName>
        <fullName>RP61</fullName>
    </alternativeName>
    <alternativeName>
        <fullName>YS20</fullName>
    </alternativeName>
</protein>
<gene>
    <name evidence="6" type="primary">RPS27B</name>
    <name type="ordered locus">YHR021C</name>
</gene>
<organism>
    <name type="scientific">Saccharomyces cerevisiae (strain ATCC 204508 / S288c)</name>
    <name type="common">Baker's yeast</name>
    <dbReference type="NCBI Taxonomy" id="559292"/>
    <lineage>
        <taxon>Eukaryota</taxon>
        <taxon>Fungi</taxon>
        <taxon>Dikarya</taxon>
        <taxon>Ascomycota</taxon>
        <taxon>Saccharomycotina</taxon>
        <taxon>Saccharomycetes</taxon>
        <taxon>Saccharomycetales</taxon>
        <taxon>Saccharomycetaceae</taxon>
        <taxon>Saccharomyces</taxon>
    </lineage>
</organism>
<dbReference type="EMBL" id="U10399">
    <property type="protein sequence ID" value="AAB68875.1"/>
    <property type="molecule type" value="Genomic_DNA"/>
</dbReference>
<dbReference type="EMBL" id="BK006934">
    <property type="protein sequence ID" value="DAA06710.1"/>
    <property type="molecule type" value="Genomic_DNA"/>
</dbReference>
<dbReference type="PIR" id="S46776">
    <property type="entry name" value="S46776"/>
</dbReference>
<dbReference type="RefSeq" id="NP_011885.1">
    <property type="nucleotide sequence ID" value="NM_001179151.1"/>
</dbReference>
<dbReference type="SMR" id="P38711"/>
<dbReference type="BioGRID" id="36451">
    <property type="interactions" value="437"/>
</dbReference>
<dbReference type="ComplexPortal" id="CPX-1599">
    <property type="entry name" value="40S cytosolic small ribosomal subunit"/>
</dbReference>
<dbReference type="FunCoup" id="P38711">
    <property type="interactions" value="926"/>
</dbReference>
<dbReference type="IntAct" id="P38711">
    <property type="interactions" value="31"/>
</dbReference>
<dbReference type="MINT" id="P38711"/>
<dbReference type="STRING" id="4932.YHR021C"/>
<dbReference type="CarbonylDB" id="P38711"/>
<dbReference type="iPTMnet" id="P38711"/>
<dbReference type="PaxDb" id="4932-YHR021C"/>
<dbReference type="PeptideAtlas" id="P38711"/>
<dbReference type="EnsemblFungi" id="YHR021C_mRNA">
    <property type="protein sequence ID" value="YHR021C"/>
    <property type="gene ID" value="YHR021C"/>
</dbReference>
<dbReference type="GeneID" id="856415"/>
<dbReference type="KEGG" id="sce:YHR021C"/>
<dbReference type="AGR" id="SGD:S000001063"/>
<dbReference type="SGD" id="S000001063">
    <property type="gene designation" value="RPS27B"/>
</dbReference>
<dbReference type="VEuPathDB" id="FungiDB:YHR021C"/>
<dbReference type="eggNOG" id="KOG1779">
    <property type="taxonomic scope" value="Eukaryota"/>
</dbReference>
<dbReference type="GeneTree" id="ENSGT00940000167938"/>
<dbReference type="HOGENOM" id="CLU_130128_3_0_1"/>
<dbReference type="InParanoid" id="P38711"/>
<dbReference type="OMA" id="CASILCQ"/>
<dbReference type="OrthoDB" id="5567124at2759"/>
<dbReference type="BioCyc" id="YEAST:G3O-31082-MONOMER"/>
<dbReference type="Reactome" id="R-SCE-156827">
    <property type="pathway name" value="L13a-mediated translational silencing of Ceruloplasmin expression"/>
</dbReference>
<dbReference type="Reactome" id="R-SCE-1799339">
    <property type="pathway name" value="SRP-dependent cotranslational protein targeting to membrane"/>
</dbReference>
<dbReference type="Reactome" id="R-SCE-72649">
    <property type="pathway name" value="Translation initiation complex formation"/>
</dbReference>
<dbReference type="Reactome" id="R-SCE-72689">
    <property type="pathway name" value="Formation of a pool of free 40S subunits"/>
</dbReference>
<dbReference type="Reactome" id="R-SCE-72695">
    <property type="pathway name" value="Formation of the ternary complex, and subsequently, the 43S complex"/>
</dbReference>
<dbReference type="Reactome" id="R-SCE-72702">
    <property type="pathway name" value="Ribosomal scanning and start codon recognition"/>
</dbReference>
<dbReference type="Reactome" id="R-SCE-72706">
    <property type="pathway name" value="GTP hydrolysis and joining of the 60S ribosomal subunit"/>
</dbReference>
<dbReference type="Reactome" id="R-SCE-975956">
    <property type="pathway name" value="Nonsense Mediated Decay (NMD) independent of the Exon Junction Complex (EJC)"/>
</dbReference>
<dbReference type="Reactome" id="R-SCE-975957">
    <property type="pathway name" value="Nonsense Mediated Decay (NMD) enhanced by the Exon Junction Complex (EJC)"/>
</dbReference>
<dbReference type="BioGRID-ORCS" id="856415">
    <property type="hits" value="3 hits in 10 CRISPR screens"/>
</dbReference>
<dbReference type="PRO" id="PR:P38711"/>
<dbReference type="Proteomes" id="UP000002311">
    <property type="component" value="Chromosome VIII"/>
</dbReference>
<dbReference type="RNAct" id="P38711">
    <property type="molecule type" value="protein"/>
</dbReference>
<dbReference type="GO" id="GO:0005829">
    <property type="term" value="C:cytosol"/>
    <property type="evidence" value="ECO:0000304"/>
    <property type="project" value="Reactome"/>
</dbReference>
<dbReference type="GO" id="GO:0022627">
    <property type="term" value="C:cytosolic small ribosomal subunit"/>
    <property type="evidence" value="ECO:0000314"/>
    <property type="project" value="SGD"/>
</dbReference>
<dbReference type="GO" id="GO:0003723">
    <property type="term" value="F:RNA binding"/>
    <property type="evidence" value="ECO:0000318"/>
    <property type="project" value="GO_Central"/>
</dbReference>
<dbReference type="GO" id="GO:0003735">
    <property type="term" value="F:structural constituent of ribosome"/>
    <property type="evidence" value="ECO:0000314"/>
    <property type="project" value="SGD"/>
</dbReference>
<dbReference type="GO" id="GO:0008270">
    <property type="term" value="F:zinc ion binding"/>
    <property type="evidence" value="ECO:0007669"/>
    <property type="project" value="UniProtKB-KW"/>
</dbReference>
<dbReference type="GO" id="GO:0000479">
    <property type="term" value="P:endonucleolytic cleavage of tricistronic rRNA transcript (SSU-rRNA, 5.8S rRNA, LSU-rRNA)"/>
    <property type="evidence" value="ECO:0000315"/>
    <property type="project" value="SGD"/>
</dbReference>
<dbReference type="GO" id="GO:0000462">
    <property type="term" value="P:maturation of SSU-rRNA from tricistronic rRNA transcript (SSU-rRNA, 5.8S rRNA, LSU-rRNA)"/>
    <property type="evidence" value="ECO:0000316"/>
    <property type="project" value="SGD"/>
</dbReference>
<dbReference type="GO" id="GO:0000028">
    <property type="term" value="P:ribosomal small subunit assembly"/>
    <property type="evidence" value="ECO:0000315"/>
    <property type="project" value="SGD"/>
</dbReference>
<dbReference type="GO" id="GO:0006412">
    <property type="term" value="P:translation"/>
    <property type="evidence" value="ECO:0007669"/>
    <property type="project" value="InterPro"/>
</dbReference>
<dbReference type="FunFam" id="2.20.25.100:FF:000001">
    <property type="entry name" value="40S ribosomal protein S27"/>
    <property type="match status" value="1"/>
</dbReference>
<dbReference type="Gene3D" id="2.20.25.100">
    <property type="entry name" value="Zn-binding ribosomal proteins"/>
    <property type="match status" value="1"/>
</dbReference>
<dbReference type="HAMAP" id="MF_00371">
    <property type="entry name" value="Ribosomal_eS27"/>
    <property type="match status" value="1"/>
</dbReference>
<dbReference type="InterPro" id="IPR000592">
    <property type="entry name" value="Ribosomal_eS27"/>
</dbReference>
<dbReference type="InterPro" id="IPR023407">
    <property type="entry name" value="Ribosomal_eS27_Zn-bd_dom_sf"/>
</dbReference>
<dbReference type="InterPro" id="IPR011332">
    <property type="entry name" value="Ribosomal_zn-bd"/>
</dbReference>
<dbReference type="PANTHER" id="PTHR11594">
    <property type="entry name" value="40S RIBOSOMAL PROTEIN S27"/>
    <property type="match status" value="1"/>
</dbReference>
<dbReference type="Pfam" id="PF01667">
    <property type="entry name" value="Ribosomal_S27e"/>
    <property type="match status" value="1"/>
</dbReference>
<dbReference type="SUPFAM" id="SSF57829">
    <property type="entry name" value="Zn-binding ribosomal proteins"/>
    <property type="match status" value="1"/>
</dbReference>
<dbReference type="PROSITE" id="PS01168">
    <property type="entry name" value="RIBOSOMAL_S27E"/>
    <property type="match status" value="1"/>
</dbReference>
<accession>P38711</accession>
<accession>D3DKW6</accession>
<reference key="1">
    <citation type="journal article" date="1994" name="Science">
        <title>Complete nucleotide sequence of Saccharomyces cerevisiae chromosome VIII.</title>
        <authorList>
            <person name="Johnston M."/>
            <person name="Andrews S."/>
            <person name="Brinkman R."/>
            <person name="Cooper J."/>
            <person name="Ding H."/>
            <person name="Dover J."/>
            <person name="Du Z."/>
            <person name="Favello A."/>
            <person name="Fulton L."/>
            <person name="Gattung S."/>
            <person name="Geisel C."/>
            <person name="Kirsten J."/>
            <person name="Kucaba T."/>
            <person name="Hillier L.W."/>
            <person name="Jier M."/>
            <person name="Johnston L."/>
            <person name="Langston Y."/>
            <person name="Latreille P."/>
            <person name="Louis E.J."/>
            <person name="Macri C."/>
            <person name="Mardis E."/>
            <person name="Menezes S."/>
            <person name="Mouser L."/>
            <person name="Nhan M."/>
            <person name="Rifkin L."/>
            <person name="Riles L."/>
            <person name="St Peter H."/>
            <person name="Trevaskis E."/>
            <person name="Vaughan K."/>
            <person name="Vignati D."/>
            <person name="Wilcox L."/>
            <person name="Wohldman P."/>
            <person name="Waterston R."/>
            <person name="Wilson R."/>
            <person name="Vaudin M."/>
        </authorList>
    </citation>
    <scope>NUCLEOTIDE SEQUENCE [LARGE SCALE GENOMIC DNA]</scope>
    <source>
        <strain>ATCC 204508 / S288c</strain>
    </source>
</reference>
<reference key="2">
    <citation type="journal article" date="2014" name="G3 (Bethesda)">
        <title>The reference genome sequence of Saccharomyces cerevisiae: Then and now.</title>
        <authorList>
            <person name="Engel S.R."/>
            <person name="Dietrich F.S."/>
            <person name="Fisk D.G."/>
            <person name="Binkley G."/>
            <person name="Balakrishnan R."/>
            <person name="Costanzo M.C."/>
            <person name="Dwight S.S."/>
            <person name="Hitz B.C."/>
            <person name="Karra K."/>
            <person name="Nash R.S."/>
            <person name="Weng S."/>
            <person name="Wong E.D."/>
            <person name="Lloyd P."/>
            <person name="Skrzypek M.S."/>
            <person name="Miyasato S.R."/>
            <person name="Simison M."/>
            <person name="Cherry J.M."/>
        </authorList>
    </citation>
    <scope>GENOME REANNOTATION</scope>
    <source>
        <strain>ATCC 204508 / S288c</strain>
    </source>
</reference>
<reference key="3">
    <citation type="journal article" date="1998" name="Yeast">
        <title>The list of cytoplasmic ribosomal proteins of Saccharomyces cerevisiae.</title>
        <authorList>
            <person name="Planta R.J."/>
            <person name="Mager W.H."/>
        </authorList>
    </citation>
    <scope>NOMENCLATURE</scope>
    <scope>SUBUNIT</scope>
</reference>
<reference key="4">
    <citation type="journal article" date="1999" name="J. Biol. Chem.">
        <title>The action of N-terminal acetyltransferases on yeast ribosomal proteins.</title>
        <authorList>
            <person name="Arnold R.J."/>
            <person name="Polevoda B."/>
            <person name="Reilly J.P."/>
            <person name="Sherman F."/>
        </authorList>
    </citation>
    <scope>ANALYSIS OF N-TERMINUS</scope>
</reference>
<reference key="5">
    <citation type="journal article" date="2003" name="Nature">
        <title>Global analysis of protein localization in budding yeast.</title>
        <authorList>
            <person name="Huh W.-K."/>
            <person name="Falvo J.V."/>
            <person name="Gerke L.C."/>
            <person name="Carroll A.S."/>
            <person name="Howson R.W."/>
            <person name="Weissman J.S."/>
            <person name="O'Shea E.K."/>
        </authorList>
    </citation>
    <scope>SUBCELLULAR LOCATION [LARGE SCALE ANALYSIS]</scope>
</reference>
<reference key="6">
    <citation type="journal article" date="2011" name="Science">
        <title>The structure of the eukaryotic ribosome at 3.0 A resolution.</title>
        <authorList>
            <person name="Ben-Shem A."/>
            <person name="Garreau de Loubresse N."/>
            <person name="Melnikov S."/>
            <person name="Jenner L."/>
            <person name="Yusupova G."/>
            <person name="Yusupov M."/>
        </authorList>
    </citation>
    <scope>SUBUNIT</scope>
    <scope>SUBCELLULAR LOCATION</scope>
</reference>
<reference key="7">
    <citation type="journal article" date="2014" name="Curr. Opin. Struct. Biol.">
        <title>A new system for naming ribosomal proteins.</title>
        <authorList>
            <person name="Ban N."/>
            <person name="Beckmann R."/>
            <person name="Cate J.H.D."/>
            <person name="Dinman J.D."/>
            <person name="Dragon F."/>
            <person name="Ellis S.R."/>
            <person name="Lafontaine D.L.J."/>
            <person name="Lindahl L."/>
            <person name="Liljas A."/>
            <person name="Lipton J.M."/>
            <person name="McAlear M.A."/>
            <person name="Moore P.B."/>
            <person name="Noller H.F."/>
            <person name="Ortega J."/>
            <person name="Panse V.G."/>
            <person name="Ramakrishnan V."/>
            <person name="Spahn C.M.T."/>
            <person name="Steitz T.A."/>
            <person name="Tchorzewski M."/>
            <person name="Tollervey D."/>
            <person name="Warren A.J."/>
            <person name="Williamson J.R."/>
            <person name="Wilson D."/>
            <person name="Yonath A."/>
            <person name="Yusupov M."/>
        </authorList>
    </citation>
    <scope>NOMENCLATURE</scope>
</reference>
<proteinExistence type="evidence at protein level"/>
<comment type="function">
    <text evidence="8">Component of the ribosome, a large ribonucleoprotein complex responsible for the synthesis of proteins in the cell. The small ribosomal subunit (SSU) binds messenger RNAs (mRNAs) and translates the encoded message by selecting cognate aminoacyl-transfer RNA (tRNA) molecules. The large subunit (LSU) contains the ribosomal catalytic site termed the peptidyl transferase center (PTC), which catalyzes the formation of peptide bonds, thereby polymerizing the amino acids delivered by tRNAs into a polypeptide chain. The nascent polypeptides leave the ribosome through a tunnel in the LSU and interact with protein factors that function in enzymatic processing, targeting, and the membrane insertion of nascent chains at the exit of the ribosomal tunnel.</text>
</comment>
<comment type="cofactor">
    <cofactor evidence="7">
        <name>Zn(2+)</name>
        <dbReference type="ChEBI" id="CHEBI:29105"/>
    </cofactor>
    <text evidence="7">Binds 1 zinc ion per subunit.</text>
</comment>
<comment type="subunit">
    <text evidence="4 9">Component of the small ribosomal subunit (SSU). Mature yeast ribosomes consist of a small (40S) and a large (60S) subunit. The 40S small subunit contains 1 molecule of ribosomal RNA (18S rRNA) and 33 different proteins (encoded by 57 genes). The large 60S subunit contains 3 rRNA molecules (25S, 5.8S and 5S rRNA) and 46 different proteins (encoded by 81 genes) (PubMed:22096102, PubMed:9559554).</text>
</comment>
<comment type="subcellular location">
    <subcellularLocation>
        <location evidence="3 4">Cytoplasm</location>
    </subcellularLocation>
</comment>
<comment type="PTM">
    <text evidence="2">The N-terminus is not modified.</text>
</comment>
<comment type="miscellaneous">
    <text>There are 2 genes for eS27 in yeast.</text>
</comment>
<comment type="similarity">
    <text evidence="7">Belongs to the eukaryotic ribosomal protein eS27 family.</text>
</comment>